<gene>
    <name type="primary">SPATA7</name>
    <name type="synonym">HSD3</name>
</gene>
<keyword id="KW-0025">Alternative splicing</keyword>
<keyword id="KW-0966">Cell projection</keyword>
<keyword id="KW-0963">Cytoplasm</keyword>
<keyword id="KW-0206">Cytoskeleton</keyword>
<keyword id="KW-0901">Leber congenital amaurosis</keyword>
<keyword id="KW-1267">Proteomics identification</keyword>
<keyword id="KW-1185">Reference proteome</keyword>
<keyword id="KW-0682">Retinitis pigmentosa</keyword>
<keyword id="KW-0716">Sensory transduction</keyword>
<keyword id="KW-0844">Vision</keyword>
<evidence type="ECO:0000250" key="1">
    <source>
        <dbReference type="UniProtKB" id="Q80VP2"/>
    </source>
</evidence>
<evidence type="ECO:0000256" key="2">
    <source>
        <dbReference type="SAM" id="MobiDB-lite"/>
    </source>
</evidence>
<evidence type="ECO:0000269" key="3">
    <source>
    </source>
</evidence>
<evidence type="ECO:0000269" key="4">
    <source>
    </source>
</evidence>
<evidence type="ECO:0000269" key="5">
    <source>
    </source>
</evidence>
<evidence type="ECO:0000269" key="6">
    <source>
    </source>
</evidence>
<evidence type="ECO:0000269" key="7">
    <source>
    </source>
</evidence>
<evidence type="ECO:0000269" key="8">
    <source>
    </source>
</evidence>
<evidence type="ECO:0000303" key="9">
    <source>
    </source>
</evidence>
<evidence type="ECO:0000303" key="10">
    <source>
    </source>
</evidence>
<evidence type="ECO:0000303" key="11">
    <source>
    </source>
</evidence>
<evidence type="ECO:0000305" key="12"/>
<protein>
    <recommendedName>
        <fullName>Spermatogenesis-associated protein 7</fullName>
    </recommendedName>
    <alternativeName>
        <fullName>HSD-3.1</fullName>
    </alternativeName>
    <alternativeName>
        <fullName>Spermatogenesis-associated protein HSD3</fullName>
    </alternativeName>
</protein>
<dbReference type="EMBL" id="AF144487">
    <property type="protein sequence ID" value="AAF66077.2"/>
    <property type="molecule type" value="mRNA"/>
</dbReference>
<dbReference type="EMBL" id="AF144488">
    <property type="protein sequence ID" value="AAF66078.1"/>
    <property type="molecule type" value="mRNA"/>
</dbReference>
<dbReference type="EMBL" id="AL136604">
    <property type="protein sequence ID" value="CAB66539.1"/>
    <property type="molecule type" value="mRNA"/>
</dbReference>
<dbReference type="EMBL" id="AL049834">
    <property type="status" value="NOT_ANNOTATED_CDS"/>
    <property type="molecule type" value="Genomic_DNA"/>
</dbReference>
<dbReference type="EMBL" id="AL353786">
    <property type="protein sequence ID" value="CAD18999.1"/>
    <property type="molecule type" value="Genomic_DNA"/>
</dbReference>
<dbReference type="EMBL" id="CH471061">
    <property type="protein sequence ID" value="EAW81380.1"/>
    <property type="molecule type" value="Genomic_DNA"/>
</dbReference>
<dbReference type="EMBL" id="BC008656">
    <property type="protein sequence ID" value="AAH08656.2"/>
    <property type="molecule type" value="mRNA"/>
</dbReference>
<dbReference type="EMBL" id="BC090875">
    <property type="protein sequence ID" value="AAH90875.1"/>
    <property type="molecule type" value="mRNA"/>
</dbReference>
<dbReference type="CCDS" id="CCDS32132.1">
    <molecule id="Q9P0W8-2"/>
</dbReference>
<dbReference type="CCDS" id="CCDS9883.1">
    <molecule id="Q9P0W8-1"/>
</dbReference>
<dbReference type="RefSeq" id="NP_001035518.1">
    <molecule id="Q9P0W8-2"/>
    <property type="nucleotide sequence ID" value="NM_001040428.4"/>
</dbReference>
<dbReference type="RefSeq" id="NP_060888.2">
    <molecule id="Q9P0W8-1"/>
    <property type="nucleotide sequence ID" value="NM_018418.5"/>
</dbReference>
<dbReference type="BioGRID" id="120922">
    <property type="interactions" value="23"/>
</dbReference>
<dbReference type="CORUM" id="Q9P0W8"/>
<dbReference type="FunCoup" id="Q9P0W8">
    <property type="interactions" value="299"/>
</dbReference>
<dbReference type="IntAct" id="Q9P0W8">
    <property type="interactions" value="23"/>
</dbReference>
<dbReference type="MINT" id="Q9P0W8"/>
<dbReference type="STRING" id="9606.ENSP00000377176"/>
<dbReference type="GlyGen" id="Q9P0W8">
    <property type="glycosylation" value="1 site"/>
</dbReference>
<dbReference type="iPTMnet" id="Q9P0W8"/>
<dbReference type="PhosphoSitePlus" id="Q9P0W8"/>
<dbReference type="BioMuta" id="SPATA7"/>
<dbReference type="DMDM" id="37089915"/>
<dbReference type="jPOST" id="Q9P0W8"/>
<dbReference type="MassIVE" id="Q9P0W8"/>
<dbReference type="PaxDb" id="9606-ENSP00000377176"/>
<dbReference type="PeptideAtlas" id="Q9P0W8"/>
<dbReference type="ProteomicsDB" id="83619">
    <molecule id="Q9P0W8-1"/>
</dbReference>
<dbReference type="ProteomicsDB" id="83620">
    <molecule id="Q9P0W8-2"/>
</dbReference>
<dbReference type="ProteomicsDB" id="83621">
    <molecule id="Q9P0W8-3"/>
</dbReference>
<dbReference type="Antibodypedia" id="26287">
    <property type="antibodies" value="142 antibodies from 26 providers"/>
</dbReference>
<dbReference type="DNASU" id="55812"/>
<dbReference type="Ensembl" id="ENST00000045347.11">
    <molecule id="Q9P0W8-3"/>
    <property type="protein sequence ID" value="ENSP00000045347.7"/>
    <property type="gene ID" value="ENSG00000042317.17"/>
</dbReference>
<dbReference type="Ensembl" id="ENST00000356583.9">
    <molecule id="Q9P0W8-2"/>
    <property type="protein sequence ID" value="ENSP00000348991.5"/>
    <property type="gene ID" value="ENSG00000042317.17"/>
</dbReference>
<dbReference type="Ensembl" id="ENST00000393545.9">
    <molecule id="Q9P0W8-1"/>
    <property type="protein sequence ID" value="ENSP00000377176.4"/>
    <property type="gene ID" value="ENSG00000042317.17"/>
</dbReference>
<dbReference type="Ensembl" id="ENST00000556553.5">
    <molecule id="Q9P0W8-2"/>
    <property type="protein sequence ID" value="ENSP00000451128.1"/>
    <property type="gene ID" value="ENSG00000042317.17"/>
</dbReference>
<dbReference type="GeneID" id="55812"/>
<dbReference type="KEGG" id="hsa:55812"/>
<dbReference type="MANE-Select" id="ENST00000393545.9">
    <property type="protein sequence ID" value="ENSP00000377176.4"/>
    <property type="RefSeq nucleotide sequence ID" value="NM_018418.5"/>
    <property type="RefSeq protein sequence ID" value="NP_060888.2"/>
</dbReference>
<dbReference type="UCSC" id="uc001xwr.5">
    <molecule id="Q9P0W8-1"/>
    <property type="organism name" value="human"/>
</dbReference>
<dbReference type="AGR" id="HGNC:20423"/>
<dbReference type="CTD" id="55812"/>
<dbReference type="DisGeNET" id="55812"/>
<dbReference type="GeneCards" id="SPATA7"/>
<dbReference type="GeneReviews" id="SPATA7"/>
<dbReference type="HGNC" id="HGNC:20423">
    <property type="gene designation" value="SPATA7"/>
</dbReference>
<dbReference type="HPA" id="ENSG00000042317">
    <property type="expression patterns" value="Tissue enriched (testis)"/>
</dbReference>
<dbReference type="MalaCards" id="SPATA7"/>
<dbReference type="MIM" id="604232">
    <property type="type" value="phenotype"/>
</dbReference>
<dbReference type="MIM" id="609868">
    <property type="type" value="gene"/>
</dbReference>
<dbReference type="neXtProt" id="NX_Q9P0W8"/>
<dbReference type="OpenTargets" id="ENSG00000042317"/>
<dbReference type="Orphanet" id="65">
    <property type="disease" value="Leber congenital amaurosis"/>
</dbReference>
<dbReference type="Orphanet" id="791">
    <property type="disease" value="Retinitis pigmentosa"/>
</dbReference>
<dbReference type="Orphanet" id="364055">
    <property type="disease" value="Severe early-childhood-onset retinal dystrophy"/>
</dbReference>
<dbReference type="PharmGKB" id="PA134907300"/>
<dbReference type="VEuPathDB" id="HostDB:ENSG00000042317"/>
<dbReference type="eggNOG" id="ENOG502QSVU">
    <property type="taxonomic scope" value="Eukaryota"/>
</dbReference>
<dbReference type="GeneTree" id="ENSGT00390000014113"/>
<dbReference type="HOGENOM" id="CLU_028379_0_0_1"/>
<dbReference type="InParanoid" id="Q9P0W8"/>
<dbReference type="OMA" id="FITEHEW"/>
<dbReference type="OrthoDB" id="6263678at2759"/>
<dbReference type="PAN-GO" id="Q9P0W8">
    <property type="GO annotations" value="8 GO annotations based on evolutionary models"/>
</dbReference>
<dbReference type="PhylomeDB" id="Q9P0W8"/>
<dbReference type="TreeFam" id="TF330591"/>
<dbReference type="PathwayCommons" id="Q9P0W8"/>
<dbReference type="SignaLink" id="Q9P0W8"/>
<dbReference type="BioGRID-ORCS" id="55812">
    <property type="hits" value="12 hits in 1157 CRISPR screens"/>
</dbReference>
<dbReference type="ChiTaRS" id="SPATA7">
    <property type="organism name" value="human"/>
</dbReference>
<dbReference type="GeneWiki" id="SPATA7"/>
<dbReference type="GenomeRNAi" id="55812"/>
<dbReference type="Pharos" id="Q9P0W8">
    <property type="development level" value="Tbio"/>
</dbReference>
<dbReference type="PRO" id="PR:Q9P0W8"/>
<dbReference type="Proteomes" id="UP000005640">
    <property type="component" value="Chromosome 14"/>
</dbReference>
<dbReference type="RNAct" id="Q9P0W8">
    <property type="molecule type" value="protein"/>
</dbReference>
<dbReference type="Bgee" id="ENSG00000042317">
    <property type="expression patterns" value="Expressed in right testis and 187 other cell types or tissues"/>
</dbReference>
<dbReference type="ExpressionAtlas" id="Q9P0W8">
    <property type="expression patterns" value="baseline and differential"/>
</dbReference>
<dbReference type="GO" id="GO:0005930">
    <property type="term" value="C:axoneme"/>
    <property type="evidence" value="ECO:0000314"/>
    <property type="project" value="UniProtKB"/>
</dbReference>
<dbReference type="GO" id="GO:0036064">
    <property type="term" value="C:ciliary basal body"/>
    <property type="evidence" value="ECO:0000314"/>
    <property type="project" value="UniProtKB"/>
</dbReference>
<dbReference type="GO" id="GO:0015630">
    <property type="term" value="C:microtubule cytoskeleton"/>
    <property type="evidence" value="ECO:0000314"/>
    <property type="project" value="UniProtKB"/>
</dbReference>
<dbReference type="GO" id="GO:0032391">
    <property type="term" value="C:photoreceptor connecting cilium"/>
    <property type="evidence" value="ECO:0000250"/>
    <property type="project" value="UniProtKB"/>
</dbReference>
<dbReference type="GO" id="GO:0120206">
    <property type="term" value="C:photoreceptor distal connecting cilium"/>
    <property type="evidence" value="ECO:0000318"/>
    <property type="project" value="GO_Central"/>
</dbReference>
<dbReference type="GO" id="GO:0120200">
    <property type="term" value="C:rod photoreceptor outer segment"/>
    <property type="evidence" value="ECO:0000318"/>
    <property type="project" value="GO_Central"/>
</dbReference>
<dbReference type="GO" id="GO:0000226">
    <property type="term" value="P:microtubule cytoskeleton organization"/>
    <property type="evidence" value="ECO:0000318"/>
    <property type="project" value="GO_Central"/>
</dbReference>
<dbReference type="GO" id="GO:0045494">
    <property type="term" value="P:photoreceptor cell maintenance"/>
    <property type="evidence" value="ECO:0000250"/>
    <property type="project" value="UniProtKB"/>
</dbReference>
<dbReference type="GO" id="GO:1903621">
    <property type="term" value="P:protein localization to photoreceptor connecting cilium"/>
    <property type="evidence" value="ECO:0000250"/>
    <property type="project" value="UniProtKB"/>
</dbReference>
<dbReference type="GO" id="GO:1903546">
    <property type="term" value="P:protein localization to photoreceptor outer segment"/>
    <property type="evidence" value="ECO:0000250"/>
    <property type="project" value="UniProtKB"/>
</dbReference>
<dbReference type="GO" id="GO:0007601">
    <property type="term" value="P:visual perception"/>
    <property type="evidence" value="ECO:0007669"/>
    <property type="project" value="UniProtKB-KW"/>
</dbReference>
<dbReference type="InterPro" id="IPR029357">
    <property type="entry name" value="SPATA7"/>
</dbReference>
<dbReference type="PANTHER" id="PTHR14917">
    <property type="entry name" value="SPERMATOGENESIS-ASSOCIATED PROTEIN 7"/>
    <property type="match status" value="1"/>
</dbReference>
<dbReference type="PANTHER" id="PTHR14917:SF2">
    <property type="entry name" value="SPERMATOGENESIS-ASSOCIATED PROTEIN 7"/>
    <property type="match status" value="1"/>
</dbReference>
<dbReference type="Pfam" id="PF15244">
    <property type="entry name" value="HSD3"/>
    <property type="match status" value="1"/>
</dbReference>
<reference key="1">
    <citation type="journal article" date="2003" name="J. Mol. Med.">
        <title>A novel gene, RSD-3/HSD-3.1, encodes a meiotic-related protein expressed in rat and human testis.</title>
        <authorList>
            <person name="Zhang X."/>
            <person name="Liu H."/>
            <person name="Zhang Y."/>
            <person name="Qiao Y."/>
            <person name="Miao S.Y."/>
            <person name="Wang L."/>
            <person name="Zhang J."/>
            <person name="Zong S."/>
            <person name="Koide S.S."/>
        </authorList>
    </citation>
    <scope>NUCLEOTIDE SEQUENCE [MRNA] (ISOFORM 1)</scope>
    <scope>NUCLEOTIDE SEQUENCE [MRNA] OF 41-599 (ISOFORM 3)</scope>
    <scope>GENE ORGANIZATION</scope>
    <scope>VARIANT MET-74</scope>
    <source>
        <tissue>Testis</tissue>
    </source>
</reference>
<reference key="2">
    <citation type="journal article" date="2001" name="Genome Res.">
        <title>Towards a catalog of human genes and proteins: sequencing and analysis of 500 novel complete protein coding human cDNAs.</title>
        <authorList>
            <person name="Wiemann S."/>
            <person name="Weil B."/>
            <person name="Wellenreuther R."/>
            <person name="Gassenhuber J."/>
            <person name="Glassl S."/>
            <person name="Ansorge W."/>
            <person name="Boecher M."/>
            <person name="Bloecker H."/>
            <person name="Bauersachs S."/>
            <person name="Blum H."/>
            <person name="Lauber J."/>
            <person name="Duesterhoeft A."/>
            <person name="Beyer A."/>
            <person name="Koehrer K."/>
            <person name="Strack N."/>
            <person name="Mewes H.-W."/>
            <person name="Ottenwaelder B."/>
            <person name="Obermaier B."/>
            <person name="Tampe J."/>
            <person name="Heubner D."/>
            <person name="Wambutt R."/>
            <person name="Korn B."/>
            <person name="Klein M."/>
            <person name="Poustka A."/>
        </authorList>
    </citation>
    <scope>NUCLEOTIDE SEQUENCE [LARGE SCALE MRNA] (ISOFORM 2)</scope>
    <scope>VARIANT MET-74</scope>
    <source>
        <tissue>Fetal brain</tissue>
    </source>
</reference>
<reference key="3">
    <citation type="journal article" date="2003" name="Nature">
        <title>The DNA sequence and analysis of human chromosome 14.</title>
        <authorList>
            <person name="Heilig R."/>
            <person name="Eckenberg R."/>
            <person name="Petit J.-L."/>
            <person name="Fonknechten N."/>
            <person name="Da Silva C."/>
            <person name="Cattolico L."/>
            <person name="Levy M."/>
            <person name="Barbe V."/>
            <person name="De Berardinis V."/>
            <person name="Ureta-Vidal A."/>
            <person name="Pelletier E."/>
            <person name="Vico V."/>
            <person name="Anthouard V."/>
            <person name="Rowen L."/>
            <person name="Madan A."/>
            <person name="Qin S."/>
            <person name="Sun H."/>
            <person name="Du H."/>
            <person name="Pepin K."/>
            <person name="Artiguenave F."/>
            <person name="Robert C."/>
            <person name="Cruaud C."/>
            <person name="Bruels T."/>
            <person name="Jaillon O."/>
            <person name="Friedlander L."/>
            <person name="Samson G."/>
            <person name="Brottier P."/>
            <person name="Cure S."/>
            <person name="Segurens B."/>
            <person name="Aniere F."/>
            <person name="Samain S."/>
            <person name="Crespeau H."/>
            <person name="Abbasi N."/>
            <person name="Aiach N."/>
            <person name="Boscus D."/>
            <person name="Dickhoff R."/>
            <person name="Dors M."/>
            <person name="Dubois I."/>
            <person name="Friedman C."/>
            <person name="Gouyvenoux M."/>
            <person name="James R."/>
            <person name="Madan A."/>
            <person name="Mairey-Estrada B."/>
            <person name="Mangenot S."/>
            <person name="Martins N."/>
            <person name="Menard M."/>
            <person name="Oztas S."/>
            <person name="Ratcliffe A."/>
            <person name="Shaffer T."/>
            <person name="Trask B."/>
            <person name="Vacherie B."/>
            <person name="Bellemere C."/>
            <person name="Belser C."/>
            <person name="Besnard-Gonnet M."/>
            <person name="Bartol-Mavel D."/>
            <person name="Boutard M."/>
            <person name="Briez-Silla S."/>
            <person name="Combette S."/>
            <person name="Dufosse-Laurent V."/>
            <person name="Ferron C."/>
            <person name="Lechaplais C."/>
            <person name="Louesse C."/>
            <person name="Muselet D."/>
            <person name="Magdelenat G."/>
            <person name="Pateau E."/>
            <person name="Petit E."/>
            <person name="Sirvain-Trukniewicz P."/>
            <person name="Trybou A."/>
            <person name="Vega-Czarny N."/>
            <person name="Bataille E."/>
            <person name="Bluet E."/>
            <person name="Bordelais I."/>
            <person name="Dubois M."/>
            <person name="Dumont C."/>
            <person name="Guerin T."/>
            <person name="Haffray S."/>
            <person name="Hammadi R."/>
            <person name="Muanga J."/>
            <person name="Pellouin V."/>
            <person name="Robert D."/>
            <person name="Wunderle E."/>
            <person name="Gauguet G."/>
            <person name="Roy A."/>
            <person name="Sainte-Marthe L."/>
            <person name="Verdier J."/>
            <person name="Verdier-Discala C."/>
            <person name="Hillier L.W."/>
            <person name="Fulton L."/>
            <person name="McPherson J."/>
            <person name="Matsuda F."/>
            <person name="Wilson R."/>
            <person name="Scarpelli C."/>
            <person name="Gyapay G."/>
            <person name="Wincker P."/>
            <person name="Saurin W."/>
            <person name="Quetier F."/>
            <person name="Waterston R."/>
            <person name="Hood L."/>
            <person name="Weissenbach J."/>
        </authorList>
    </citation>
    <scope>NUCLEOTIDE SEQUENCE [LARGE SCALE GENOMIC DNA]</scope>
</reference>
<reference key="4">
    <citation type="submission" date="2005-07" db="EMBL/GenBank/DDBJ databases">
        <authorList>
            <person name="Mural R.J."/>
            <person name="Istrail S."/>
            <person name="Sutton G.G."/>
            <person name="Florea L."/>
            <person name="Halpern A.L."/>
            <person name="Mobarry C.M."/>
            <person name="Lippert R."/>
            <person name="Walenz B."/>
            <person name="Shatkay H."/>
            <person name="Dew I."/>
            <person name="Miller J.R."/>
            <person name="Flanigan M.J."/>
            <person name="Edwards N.J."/>
            <person name="Bolanos R."/>
            <person name="Fasulo D."/>
            <person name="Halldorsson B.V."/>
            <person name="Hannenhalli S."/>
            <person name="Turner R."/>
            <person name="Yooseph S."/>
            <person name="Lu F."/>
            <person name="Nusskern D.R."/>
            <person name="Shue B.C."/>
            <person name="Zheng X.H."/>
            <person name="Zhong F."/>
            <person name="Delcher A.L."/>
            <person name="Huson D.H."/>
            <person name="Kravitz S.A."/>
            <person name="Mouchard L."/>
            <person name="Reinert K."/>
            <person name="Remington K.A."/>
            <person name="Clark A.G."/>
            <person name="Waterman M.S."/>
            <person name="Eichler E.E."/>
            <person name="Adams M.D."/>
            <person name="Hunkapiller M.W."/>
            <person name="Myers E.W."/>
            <person name="Venter J.C."/>
        </authorList>
    </citation>
    <scope>NUCLEOTIDE SEQUENCE [LARGE SCALE GENOMIC DNA]</scope>
</reference>
<reference key="5">
    <citation type="journal article" date="2004" name="Genome Res.">
        <title>The status, quality, and expansion of the NIH full-length cDNA project: the Mammalian Gene Collection (MGC).</title>
        <authorList>
            <consortium name="The MGC Project Team"/>
        </authorList>
    </citation>
    <scope>NUCLEOTIDE SEQUENCE [LARGE SCALE MRNA] (ISOFORM 2)</scope>
    <scope>NUCLEOTIDE SEQUENCE [LARGE SCALE MRNA] OF 132-599 (ISOFORMS 1/2)</scope>
    <source>
        <tissue>Colon</tissue>
        <tissue>Testis</tissue>
    </source>
</reference>
<reference key="6">
    <citation type="journal article" date="2009" name="Am. J. Hum. Genet.">
        <title>Mutations in SPATA7 cause Leber congenital amaurosis and juvenile retinitis pigmentosa.</title>
        <authorList>
            <person name="Wang H."/>
            <person name="den Hollander A.I."/>
            <person name="Moayedi Y."/>
            <person name="Abulimiti A."/>
            <person name="Li Y."/>
            <person name="Collin R.W.J."/>
            <person name="Hoyng C.B."/>
            <person name="Lopez I."/>
            <person name="Bray M."/>
            <person name="Lewis R.A."/>
            <person name="Lupski J.R."/>
            <person name="Mardon G."/>
            <person name="Koenekoop R.K."/>
            <person name="Chen R."/>
        </authorList>
    </citation>
    <scope>INVOLVEMENT IN LCA3 AND RP94</scope>
</reference>
<reference key="7">
    <citation type="journal article" date="2015" name="Hum. Mol. Genet.">
        <title>Spata7 is a retinal ciliopathy gene critical for correct RPGRIP1 localization and protein trafficking in the retina.</title>
        <authorList>
            <person name="Eblimit A."/>
            <person name="Nguyen T.M."/>
            <person name="Chen Y."/>
            <person name="Esteve-Rudd J."/>
            <person name="Zhong H."/>
            <person name="Letteboer S."/>
            <person name="van Reeuwijk J."/>
            <person name="Simons D.L."/>
            <person name="Ding Q."/>
            <person name="Wu K.M."/>
            <person name="Li Y."/>
            <person name="van Beersum S."/>
            <person name="Moayedi Y."/>
            <person name="Xu H."/>
            <person name="Pickard P."/>
            <person name="Wang K."/>
            <person name="Gan L."/>
            <person name="Wu S.M."/>
            <person name="Williams D.S."/>
            <person name="Mardon G."/>
            <person name="Roepman R."/>
            <person name="Chen R."/>
        </authorList>
    </citation>
    <scope>INTERACTION WITH RPGRIP1</scope>
    <scope>SUBCELLULAR LOCATION</scope>
</reference>
<reference key="8">
    <citation type="journal article" date="2015" name="Nat. Cell Biol.">
        <title>An siRNA-based functional genomics screen for the identification of regulators of ciliogenesis and ciliopathy genes.</title>
        <authorList>
            <consortium name="UK10K Consortium"/>
            <consortium name="University of Washington Center for Mendelian Genomics"/>
            <person name="Wheway G."/>
            <person name="Schmidts M."/>
            <person name="Mans D.A."/>
            <person name="Szymanska K."/>
            <person name="Nguyen T.M."/>
            <person name="Racher H."/>
            <person name="Phelps I.G."/>
            <person name="Toedt G."/>
            <person name="Kennedy J."/>
            <person name="Wunderlich K.A."/>
            <person name="Sorusch N."/>
            <person name="Abdelhamed Z.A."/>
            <person name="Natarajan S."/>
            <person name="Herridge W."/>
            <person name="van Reeuwijk J."/>
            <person name="Horn N."/>
            <person name="Boldt K."/>
            <person name="Parry D.A."/>
            <person name="Letteboer S.J."/>
            <person name="Roosing S."/>
            <person name="Adams M."/>
            <person name="Bell S.M."/>
            <person name="Bond J."/>
            <person name="Higgins J."/>
            <person name="Morrison E.E."/>
            <person name="Tomlinson D.C."/>
            <person name="Slaats G.G."/>
            <person name="van Dam T.J."/>
            <person name="Huang L."/>
            <person name="Kessler K."/>
            <person name="Giessl A."/>
            <person name="Logan C.V."/>
            <person name="Boyle E.A."/>
            <person name="Shendure J."/>
            <person name="Anazi S."/>
            <person name="Aldahmesh M."/>
            <person name="Al Hazzaa S."/>
            <person name="Hegele R.A."/>
            <person name="Ober C."/>
            <person name="Frosk P."/>
            <person name="Mhanni A.A."/>
            <person name="Chodirker B.N."/>
            <person name="Chudley A.E."/>
            <person name="Lamont R."/>
            <person name="Bernier F.P."/>
            <person name="Beaulieu C.L."/>
            <person name="Gordon P."/>
            <person name="Pon R.T."/>
            <person name="Donahue C."/>
            <person name="Barkovich A.J."/>
            <person name="Wolf L."/>
            <person name="Toomes C."/>
            <person name="Thiel C.T."/>
            <person name="Boycott K.M."/>
            <person name="McKibbin M."/>
            <person name="Inglehearn C.F."/>
            <person name="Stewart F."/>
            <person name="Omran H."/>
            <person name="Huynen M.A."/>
            <person name="Sergouniotis P.I."/>
            <person name="Alkuraya F.S."/>
            <person name="Parboosingh J.S."/>
            <person name="Innes A.M."/>
            <person name="Willoughby C.E."/>
            <person name="Giles R.H."/>
            <person name="Webster A.R."/>
            <person name="Ueffing M."/>
            <person name="Blacque O."/>
            <person name="Gleeson J.G."/>
            <person name="Wolfrum U."/>
            <person name="Beales P.L."/>
            <person name="Gibson T."/>
            <person name="Doherty D."/>
            <person name="Mitchison H.M."/>
            <person name="Roepman R."/>
            <person name="Johnson C.A."/>
        </authorList>
    </citation>
    <scope>IDENTIFICATION BY MASS SPECTROMETRY</scope>
    <scope>IDENTIFICATION IN A COMPLEX WITH CFAP410; NEK1 AND SPATA7</scope>
</reference>
<reference key="9">
    <citation type="journal article" date="2011" name="PLoS ONE">
        <title>Detection of variants in 15 genes in 87 unrelated Chinese patients with Leber congenital amaurosis.</title>
        <authorList>
            <person name="Li L."/>
            <person name="Xiao X."/>
            <person name="Li S."/>
            <person name="Jia X."/>
            <person name="Wang P."/>
            <person name="Guo X."/>
            <person name="Jiao X."/>
            <person name="Zhang Q."/>
            <person name="Hejtmancik J.F."/>
        </authorList>
    </citation>
    <scope>VARIANT THR-332</scope>
</reference>
<proteinExistence type="evidence at protein level"/>
<sequence length="599" mass="67719">MDGSRRVRATSVLPRYGPPCLFKGHLSTKSNAFCTDSSSLRLSTLQLVKNHMAVHYNKILSAKAAVDCSVPVSVSTSIKYADQQRREKLKKELAQCEKEFKLTKTAMRANYKNNSKSLFNTLQKPSGEPQIEDDMLKEEMNGFSSFARSLVPSSERLHLSLHKSSKVITNGPEKNSSSSPSSVDYAASGPRKLSSGALYGRRPRSTFPNSHRFQLVISKAPSGDLLDKHSELFSNKQLPFTPRTLKTEAKSFLSQYRYYTPAKRKKDFTDQRIEAETQTELSFKSELGTAETKNMTDSEMNIKQASNCVTYDAKEKIAPLPLEGHDSTWDEIKDDALQHSSPRAMCQYSLKPPSTRKIYSDEEELLYLSFIEDVTDEILKLGLFSNRFLERLFERHIKQNKHLEEEKMRHLLHVLKVDLGCTSEENSVKQNDVDMLNVFDFEKAGNSEPNELKNESEVTIQQERQQYQKALDMLLSAPKDENEIFPSPTEFFMPIYKSKHSEGVIIQQVNDETNLETSTLDENHPSISDSLTDRETSVNVIEGDSDPEKVEISNGLCGLNTSPSQSVQFSSVKGDNNHDMELSTLKIMEMSIEDCPLDV</sequence>
<comment type="function">
    <text evidence="1">Involved in the maintenance of both rod and cone photoreceptor cells (By similarity). It is required for recruitment and proper localization of RPGRIP1 to the photoreceptor connecting cilium (CC), as well as photoreceptor-specific localization of proximal CC proteins at the distal CC (By similarity). Maintenance of protein localization at the photoreceptor-specific distal CC is essential for normal microtubule stability and to prevent photoreceptor degeneration (By similarity).</text>
</comment>
<comment type="subunit">
    <text evidence="1 7 8">Found in a complex with CFAP410, NEK1 and SPATA7 (PubMed:26167768). Interacts with NEK1 (PubMed:26167768). Interacts with RPGRIP1 (PubMed:25398945). Interacts with RPGR (By similarity). Interacts with NPHP4 (By similarity). Interacts with NPHP1 (By similarity). Interacts with AHI1 (By similarity).</text>
</comment>
<comment type="subcellular location">
    <subcellularLocation>
        <location evidence="7">Cytoplasm</location>
        <location evidence="7">Cytoskeleton</location>
        <location evidence="7">Cilium axoneme</location>
    </subcellularLocation>
    <subcellularLocation>
        <location evidence="7">Cytoplasm</location>
        <location evidence="7">Cytoskeleton</location>
        <location evidence="7">Cilium basal body</location>
    </subcellularLocation>
    <subcellularLocation>
        <location evidence="7">Cytoplasm</location>
        <location evidence="7">Cytoskeleton</location>
    </subcellularLocation>
    <subcellularLocation>
        <location evidence="1">Cell projection</location>
        <location evidence="1">Cilium</location>
        <location evidence="1">Photoreceptor outer segment</location>
    </subcellularLocation>
    <text evidence="7">Localizes to the microtubule network.</text>
</comment>
<comment type="alternative products">
    <event type="alternative splicing"/>
    <isoform>
        <id>Q9P0W8-1</id>
        <name>1</name>
        <sequence type="displayed"/>
    </isoform>
    <isoform>
        <id>Q9P0W8-2</id>
        <name>2</name>
        <sequence type="described" ref="VSP_008341"/>
    </isoform>
    <isoform>
        <id>Q9P0W8-3</id>
        <name>3</name>
        <sequence type="described" ref="VSP_008342"/>
    </isoform>
</comment>
<comment type="disease" evidence="5">
    <disease id="DI-00631">
        <name>Leber congenital amaurosis 3</name>
        <acronym>LCA3</acronym>
        <description>A severe dystrophy of the retina, typically becoming evident in the first years of life. Visual function is usually poor and often accompanied by nystagmus, sluggish or near-absent pupillary responses, photophobia, high hyperopia and keratoconus.</description>
        <dbReference type="MIM" id="604232"/>
    </disease>
    <text>The disease is caused by variants affecting the gene represented in this entry.</text>
</comment>
<comment type="disease" evidence="5">
    <disease id="DI-06495">
        <name>Retinitis pigmentosa 94, variable age at onset, autosomal recessive</name>
        <acronym>RP94</acronym>
        <description>A form of retinitis pigmentosa, a retinal dystrophy belonging to the group of pigmentary retinopathies. Retinitis pigmentosa is characterized by retinal pigment deposits visible on fundus examination and primary loss of rod photoreceptor cells followed by secondary loss of cone photoreceptors. Patients typically have night vision blindness and loss of midperipheral visual field.</description>
        <dbReference type="MIM" id="604232"/>
    </disease>
    <text>The disease is caused by variants affecting the gene represented in this entry.</text>
</comment>
<organism>
    <name type="scientific">Homo sapiens</name>
    <name type="common">Human</name>
    <dbReference type="NCBI Taxonomy" id="9606"/>
    <lineage>
        <taxon>Eukaryota</taxon>
        <taxon>Metazoa</taxon>
        <taxon>Chordata</taxon>
        <taxon>Craniata</taxon>
        <taxon>Vertebrata</taxon>
        <taxon>Euteleostomi</taxon>
        <taxon>Mammalia</taxon>
        <taxon>Eutheria</taxon>
        <taxon>Euarchontoglires</taxon>
        <taxon>Primates</taxon>
        <taxon>Haplorrhini</taxon>
        <taxon>Catarrhini</taxon>
        <taxon>Hominidae</taxon>
        <taxon>Homo</taxon>
    </lineage>
</organism>
<accession>Q9P0W8</accession>
<accession>Q5BKY5</accession>
<accession>Q8WX30</accession>
<accession>Q96HF3</accession>
<accession>Q9H0X0</accession>
<accession>Q9P0W7</accession>
<name>SPAT7_HUMAN</name>
<feature type="chain" id="PRO_0000072104" description="Spermatogenesis-associated protein 7">
    <location>
        <begin position="1"/>
        <end position="599"/>
    </location>
</feature>
<feature type="region of interest" description="Disordered" evidence="2">
    <location>
        <begin position="163"/>
        <end position="205"/>
    </location>
</feature>
<feature type="compositionally biased region" description="Polar residues" evidence="2">
    <location>
        <begin position="166"/>
        <end position="175"/>
    </location>
</feature>
<feature type="splice variant" id="VSP_008341" description="In isoform 2." evidence="9 11">
    <location>
        <begin position="32"/>
        <end position="63"/>
    </location>
</feature>
<feature type="splice variant" id="VSP_008342" description="In isoform 3." evidence="10">
    <location>
        <begin position="428"/>
        <end position="568"/>
    </location>
</feature>
<feature type="sequence variant" id="VAR_051370" description="In dbSNP:rs4904448.">
    <original>D</original>
    <variation>N</variation>
    <location>
        <position position="2"/>
    </location>
</feature>
<feature type="sequence variant" id="VAR_016912" description="In dbSNP:rs3179969." evidence="3 4">
    <original>V</original>
    <variation>M</variation>
    <location>
        <position position="74"/>
    </location>
</feature>
<feature type="sequence variant" id="VAR_051371" description="In dbSNP:rs35137272.">
    <original>F</original>
    <variation>L</variation>
    <location>
        <position position="119"/>
    </location>
</feature>
<feature type="sequence variant" id="VAR_051372" description="In dbSNP:rs17124662.">
    <original>S</original>
    <variation>N</variation>
    <location>
        <position position="165"/>
    </location>
</feature>
<feature type="sequence variant" id="VAR_051373" description="In dbSNP:rs17124677.">
    <original>G</original>
    <variation>E</variation>
    <location>
        <position position="324"/>
    </location>
</feature>
<feature type="sequence variant" id="VAR_067191" description="Found in a patient with LCA3; dbSNP:rs534658921." evidence="6">
    <original>I</original>
    <variation>T</variation>
    <location>
        <position position="332"/>
    </location>
</feature>
<feature type="sequence variant" id="VAR_051374" description="In dbSNP:rs10139784.">
    <original>R</original>
    <variation>Q</variation>
    <location>
        <position position="534"/>
    </location>
</feature>
<feature type="sequence conflict" description="In Ref. 2; CAB66539." evidence="12" ref="2">
    <original>K</original>
    <variation>E</variation>
    <location>
        <position position="124"/>
    </location>
</feature>
<feature type="sequence conflict" description="In Ref. 3; AAF66077." evidence="12" ref="3">
    <original>I</original>
    <variation>T</variation>
    <location>
        <position position="217"/>
    </location>
</feature>
<feature type="sequence conflict" description="In Ref. 1; AAF66078." evidence="12" ref="1">
    <original>A</original>
    <variation>AA</variation>
    <location>
        <position position="305"/>
    </location>
</feature>
<feature type="sequence conflict" description="In Ref. 2; CAB66539." evidence="12" ref="2">
    <original>E</original>
    <variation>G</variation>
    <location>
        <position position="405"/>
    </location>
</feature>
<feature type="sequence conflict" description="In Ref. 2; CAB66539." evidence="12" ref="2">
    <original>E</original>
    <variation>K</variation>
    <location>
        <position position="451"/>
    </location>
</feature>